<keyword id="KW-0249">Electron transport</keyword>
<keyword id="KW-0349">Heme</keyword>
<keyword id="KW-0408">Iron</keyword>
<keyword id="KW-0479">Metal-binding</keyword>
<keyword id="KW-0574">Periplasm</keyword>
<keyword id="KW-1185">Reference proteome</keyword>
<keyword id="KW-0732">Signal</keyword>
<keyword id="KW-0813">Transport</keyword>
<gene>
    <name type="primary">fccA</name>
    <name type="ordered locus">CT2080</name>
</gene>
<name>CYSD_CHLTE</name>
<feature type="signal peptide" evidence="1">
    <location>
        <begin position="1"/>
        <end position="16"/>
    </location>
</feature>
<feature type="chain" id="PRO_0000006568" description="Cytochrome subunit of sulfide dehydrogenase">
    <location>
        <begin position="17"/>
        <end position="110"/>
    </location>
</feature>
<feature type="binding site" description="covalent" evidence="2">
    <location>
        <position position="41"/>
    </location>
    <ligand>
        <name>heme c</name>
        <dbReference type="ChEBI" id="CHEBI:61717"/>
    </ligand>
</feature>
<feature type="binding site" description="covalent" evidence="2">
    <location>
        <position position="44"/>
    </location>
    <ligand>
        <name>heme c</name>
        <dbReference type="ChEBI" id="CHEBI:61717"/>
    </ligand>
</feature>
<feature type="binding site" description="axial binding residue" evidence="2">
    <location>
        <position position="45"/>
    </location>
    <ligand>
        <name>heme c</name>
        <dbReference type="ChEBI" id="CHEBI:61717"/>
    </ligand>
    <ligandPart>
        <name>Fe</name>
        <dbReference type="ChEBI" id="CHEBI:18248"/>
    </ligandPart>
</feature>
<feature type="binding site" description="axial binding residue" evidence="2">
    <location>
        <position position="83"/>
    </location>
    <ligand>
        <name>heme c</name>
        <dbReference type="ChEBI" id="CHEBI:61717"/>
    </ligand>
    <ligandPart>
        <name>Fe</name>
        <dbReference type="ChEBI" id="CHEBI:18248"/>
    </ligandPart>
</feature>
<comment type="function">
    <text>Monoheme cytochrome that function as the electron transport subunit of sulfide dehydrogenase.</text>
</comment>
<comment type="subunit">
    <text>Dimer of one cytochrome and one flavoprotein.</text>
</comment>
<comment type="subcellular location">
    <subcellularLocation>
        <location>Periplasm</location>
    </subcellularLocation>
</comment>
<comment type="PTM">
    <text>Binds 1 heme c group covalently per subunit.</text>
</comment>
<protein>
    <recommendedName>
        <fullName>Cytochrome subunit of sulfide dehydrogenase</fullName>
    </recommendedName>
    <alternativeName>
        <fullName>FCSD</fullName>
        <shortName>FC</shortName>
    </alternativeName>
    <alternativeName>
        <fullName>Flavocytochrome c cytochrome subunit</fullName>
    </alternativeName>
</protein>
<proteinExistence type="inferred from homology"/>
<evidence type="ECO:0000255" key="1"/>
<evidence type="ECO:0000255" key="2">
    <source>
        <dbReference type="PROSITE-ProRule" id="PRU00433"/>
    </source>
</evidence>
<reference key="1">
    <citation type="journal article" date="2002" name="Proc. Natl. Acad. Sci. U.S.A.">
        <title>The complete genome sequence of Chlorobium tepidum TLS, a photosynthetic, anaerobic, green-sulfur bacterium.</title>
        <authorList>
            <person name="Eisen J.A."/>
            <person name="Nelson K.E."/>
            <person name="Paulsen I.T."/>
            <person name="Heidelberg J.F."/>
            <person name="Wu M."/>
            <person name="Dodson R.J."/>
            <person name="DeBoy R.T."/>
            <person name="Gwinn M.L."/>
            <person name="Nelson W.C."/>
            <person name="Haft D.H."/>
            <person name="Hickey E.K."/>
            <person name="Peterson J.D."/>
            <person name="Durkin A.S."/>
            <person name="Kolonay J.F."/>
            <person name="Yang F."/>
            <person name="Holt I.E."/>
            <person name="Umayam L.A."/>
            <person name="Mason T.M."/>
            <person name="Brenner M."/>
            <person name="Shea T.P."/>
            <person name="Parksey D.S."/>
            <person name="Nierman W.C."/>
            <person name="Feldblyum T.V."/>
            <person name="Hansen C.L."/>
            <person name="Craven M.B."/>
            <person name="Radune D."/>
            <person name="Vamathevan J.J."/>
            <person name="Khouri H.M."/>
            <person name="White O."/>
            <person name="Gruber T.M."/>
            <person name="Ketchum K.A."/>
            <person name="Venter J.C."/>
            <person name="Tettelin H."/>
            <person name="Bryant D.A."/>
            <person name="Fraser C.M."/>
        </authorList>
    </citation>
    <scope>NUCLEOTIDE SEQUENCE [LARGE SCALE GENOMIC DNA]</scope>
    <source>
        <strain>ATCC 49652 / DSM 12025 / NBRC 103806 / TLS</strain>
    </source>
</reference>
<accession>Q8KAS5</accession>
<dbReference type="EMBL" id="AE006470">
    <property type="protein sequence ID" value="AAM73297.1"/>
    <property type="molecule type" value="Genomic_DNA"/>
</dbReference>
<dbReference type="RefSeq" id="NP_662955.1">
    <property type="nucleotide sequence ID" value="NC_002932.3"/>
</dbReference>
<dbReference type="RefSeq" id="WP_010933735.1">
    <property type="nucleotide sequence ID" value="NC_002932.3"/>
</dbReference>
<dbReference type="SMR" id="Q8KAS5"/>
<dbReference type="STRING" id="194439.CT2080"/>
<dbReference type="EnsemblBacteria" id="AAM73297">
    <property type="protein sequence ID" value="AAM73297"/>
    <property type="gene ID" value="CT2080"/>
</dbReference>
<dbReference type="KEGG" id="cte:CT2080"/>
<dbReference type="eggNOG" id="COG2863">
    <property type="taxonomic scope" value="Bacteria"/>
</dbReference>
<dbReference type="HOGENOM" id="CLU_128253_2_0_10"/>
<dbReference type="OrthoDB" id="8526831at2"/>
<dbReference type="Proteomes" id="UP000001007">
    <property type="component" value="Chromosome"/>
</dbReference>
<dbReference type="GO" id="GO:0042597">
    <property type="term" value="C:periplasmic space"/>
    <property type="evidence" value="ECO:0007669"/>
    <property type="project" value="UniProtKB-SubCell"/>
</dbReference>
<dbReference type="GO" id="GO:0009055">
    <property type="term" value="F:electron transfer activity"/>
    <property type="evidence" value="ECO:0007669"/>
    <property type="project" value="InterPro"/>
</dbReference>
<dbReference type="GO" id="GO:0020037">
    <property type="term" value="F:heme binding"/>
    <property type="evidence" value="ECO:0007669"/>
    <property type="project" value="InterPro"/>
</dbReference>
<dbReference type="GO" id="GO:0046872">
    <property type="term" value="F:metal ion binding"/>
    <property type="evidence" value="ECO:0007669"/>
    <property type="project" value="UniProtKB-KW"/>
</dbReference>
<dbReference type="Gene3D" id="1.10.760.10">
    <property type="entry name" value="Cytochrome c-like domain"/>
    <property type="match status" value="1"/>
</dbReference>
<dbReference type="InterPro" id="IPR009056">
    <property type="entry name" value="Cyt_c-like_dom"/>
</dbReference>
<dbReference type="InterPro" id="IPR036909">
    <property type="entry name" value="Cyt_c-like_dom_sf"/>
</dbReference>
<dbReference type="InterPro" id="IPR050597">
    <property type="entry name" value="Cytochrome_c_Oxidase_Subunit"/>
</dbReference>
<dbReference type="PANTHER" id="PTHR33751">
    <property type="entry name" value="CBB3-TYPE CYTOCHROME C OXIDASE SUBUNIT FIXP"/>
    <property type="match status" value="1"/>
</dbReference>
<dbReference type="PANTHER" id="PTHR33751:SF9">
    <property type="entry name" value="CYTOCHROME C4"/>
    <property type="match status" value="1"/>
</dbReference>
<dbReference type="SUPFAM" id="SSF46626">
    <property type="entry name" value="Cytochrome c"/>
    <property type="match status" value="1"/>
</dbReference>
<dbReference type="PROSITE" id="PS51007">
    <property type="entry name" value="CYTC"/>
    <property type="match status" value="1"/>
</dbReference>
<organism>
    <name type="scientific">Chlorobaculum tepidum (strain ATCC 49652 / DSM 12025 / NBRC 103806 / TLS)</name>
    <name type="common">Chlorobium tepidum</name>
    <dbReference type="NCBI Taxonomy" id="194439"/>
    <lineage>
        <taxon>Bacteria</taxon>
        <taxon>Pseudomonadati</taxon>
        <taxon>Chlorobiota</taxon>
        <taxon>Chlorobiia</taxon>
        <taxon>Chlorobiales</taxon>
        <taxon>Chlorobiaceae</taxon>
        <taxon>Chlorobaculum</taxon>
    </lineage>
</organism>
<sequence length="110" mass="11438">MLAAAPLLLASGNGFATTGPAAKPAVKPVTESRGEILSLSCAGCHGTDGNSSSVIPSIYGKSPEYIETALIDFKNGSRTSTVMGRHAKGYTGEEIHLIAEYFGNLSKKNH</sequence>